<keyword id="KW-0067">ATP-binding</keyword>
<keyword id="KW-1003">Cell membrane</keyword>
<keyword id="KW-0192">Crown gall tumor</keyword>
<keyword id="KW-0418">Kinase</keyword>
<keyword id="KW-0472">Membrane</keyword>
<keyword id="KW-0547">Nucleotide-binding</keyword>
<keyword id="KW-0597">Phosphoprotein</keyword>
<keyword id="KW-0614">Plasmid</keyword>
<keyword id="KW-0808">Transferase</keyword>
<keyword id="KW-0812">Transmembrane</keyword>
<keyword id="KW-1133">Transmembrane helix</keyword>
<keyword id="KW-0902">Two-component regulatory system</keyword>
<proteinExistence type="evidence at protein level"/>
<reference key="1">
    <citation type="journal article" date="1988" name="Plant Mol. Biol.">
        <title>Molecular characterization of the virulence gene virA of the Agrobacterium tumefaciens octopine Ti plasmid.</title>
        <authorList>
            <person name="Melchers L.S."/>
            <person name="Thompson D.V."/>
            <person name="Idler K.B."/>
            <person name="Neuteboom S.T.C."/>
            <person name="Maagd R.A."/>
            <person name="Schilperoort R.A."/>
            <person name="Hooykaas P.J.J."/>
        </authorList>
        <dbReference type="AGRICOLA" id="IND92000074"/>
    </citation>
    <scope>NUCLEOTIDE SEQUENCE [GENOMIC DNA]</scope>
</reference>
<reference key="2">
    <citation type="journal article" date="1989" name="Mol. Microbiol.">
        <title>Characterization of the virA virulence gene of the nopaline plasmid, pTiC58, of Agrobacterium tumefaciens.</title>
        <authorList>
            <person name="Morel P."/>
            <person name="Powell B.S."/>
            <person name="Rogowsky P.M."/>
            <person name="Kado C.I."/>
        </authorList>
    </citation>
    <scope>NUCLEOTIDE SEQUENCE [GENOMIC DNA]</scope>
</reference>
<organism>
    <name type="scientific">Agrobacterium tumefaciens (strain 15955)</name>
    <dbReference type="NCBI Taxonomy" id="190386"/>
    <lineage>
        <taxon>Bacteria</taxon>
        <taxon>Pseudomonadati</taxon>
        <taxon>Pseudomonadota</taxon>
        <taxon>Alphaproteobacteria</taxon>
        <taxon>Hyphomicrobiales</taxon>
        <taxon>Rhizobiaceae</taxon>
        <taxon>Rhizobium/Agrobacterium group</taxon>
        <taxon>Agrobacterium</taxon>
        <taxon>Agrobacterium tumefaciens complex</taxon>
    </lineage>
</organism>
<evidence type="ECO:0000255" key="1"/>
<evidence type="ECO:0000255" key="2">
    <source>
        <dbReference type="PROSITE-ProRule" id="PRU00107"/>
    </source>
</evidence>
<evidence type="ECO:0000255" key="3">
    <source>
        <dbReference type="PROSITE-ProRule" id="PRU00169"/>
    </source>
</evidence>
<evidence type="ECO:0000305" key="4"/>
<dbReference type="EC" id="2.7.13.3"/>
<dbReference type="EMBL" id="X16905">
    <property type="protein sequence ID" value="CAA34777.1"/>
    <property type="status" value="ALT_SEQ"/>
    <property type="molecule type" value="Genomic_DNA"/>
</dbReference>
<dbReference type="SMR" id="P10799"/>
<dbReference type="BRENDA" id="2.7.13.3">
    <property type="organism ID" value="200"/>
</dbReference>
<dbReference type="GO" id="GO:0005886">
    <property type="term" value="C:plasma membrane"/>
    <property type="evidence" value="ECO:0007669"/>
    <property type="project" value="UniProtKB-SubCell"/>
</dbReference>
<dbReference type="GO" id="GO:0005524">
    <property type="term" value="F:ATP binding"/>
    <property type="evidence" value="ECO:0007669"/>
    <property type="project" value="UniProtKB-KW"/>
</dbReference>
<dbReference type="GO" id="GO:0042802">
    <property type="term" value="F:identical protein binding"/>
    <property type="evidence" value="ECO:0000353"/>
    <property type="project" value="IntAct"/>
</dbReference>
<dbReference type="GO" id="GO:0000155">
    <property type="term" value="F:phosphorelay sensor kinase activity"/>
    <property type="evidence" value="ECO:0007669"/>
    <property type="project" value="InterPro"/>
</dbReference>
<dbReference type="CDD" id="cd00082">
    <property type="entry name" value="HisKA"/>
    <property type="match status" value="1"/>
</dbReference>
<dbReference type="Gene3D" id="1.10.287.130">
    <property type="match status" value="1"/>
</dbReference>
<dbReference type="Gene3D" id="3.30.565.10">
    <property type="entry name" value="Histidine kinase-like ATPase, C-terminal domain"/>
    <property type="match status" value="1"/>
</dbReference>
<dbReference type="InterPro" id="IPR045812">
    <property type="entry name" value="DAHL"/>
</dbReference>
<dbReference type="InterPro" id="IPR036890">
    <property type="entry name" value="HATPase_C_sf"/>
</dbReference>
<dbReference type="InterPro" id="IPR005467">
    <property type="entry name" value="His_kinase_dom"/>
</dbReference>
<dbReference type="InterPro" id="IPR003661">
    <property type="entry name" value="HisK_dim/P_dom"/>
</dbReference>
<dbReference type="InterPro" id="IPR036097">
    <property type="entry name" value="HisK_dim/P_sf"/>
</dbReference>
<dbReference type="InterPro" id="IPR004358">
    <property type="entry name" value="Sig_transdc_His_kin-like_C"/>
</dbReference>
<dbReference type="InterPro" id="IPR001789">
    <property type="entry name" value="Sig_transdc_resp-reg_receiver"/>
</dbReference>
<dbReference type="NCBIfam" id="NF010411">
    <property type="entry name" value="PRK13837.1"/>
    <property type="match status" value="1"/>
</dbReference>
<dbReference type="PANTHER" id="PTHR43065">
    <property type="entry name" value="SENSOR HISTIDINE KINASE"/>
    <property type="match status" value="1"/>
</dbReference>
<dbReference type="PANTHER" id="PTHR43065:SF42">
    <property type="entry name" value="TWO-COMPONENT SENSOR PPRA"/>
    <property type="match status" value="1"/>
</dbReference>
<dbReference type="Pfam" id="PF19443">
    <property type="entry name" value="DAHL"/>
    <property type="match status" value="1"/>
</dbReference>
<dbReference type="Pfam" id="PF02518">
    <property type="entry name" value="HATPase_c"/>
    <property type="match status" value="1"/>
</dbReference>
<dbReference type="Pfam" id="PF00512">
    <property type="entry name" value="HisKA"/>
    <property type="match status" value="1"/>
</dbReference>
<dbReference type="PRINTS" id="PR00344">
    <property type="entry name" value="BCTRLSENSOR"/>
</dbReference>
<dbReference type="SMART" id="SM00387">
    <property type="entry name" value="HATPase_c"/>
    <property type="match status" value="1"/>
</dbReference>
<dbReference type="SMART" id="SM00388">
    <property type="entry name" value="HisKA"/>
    <property type="match status" value="1"/>
</dbReference>
<dbReference type="SUPFAM" id="SSF55874">
    <property type="entry name" value="ATPase domain of HSP90 chaperone/DNA topoisomerase II/histidine kinase"/>
    <property type="match status" value="1"/>
</dbReference>
<dbReference type="SUPFAM" id="SSF47384">
    <property type="entry name" value="Homodimeric domain of signal transducing histidine kinase"/>
    <property type="match status" value="1"/>
</dbReference>
<dbReference type="PROSITE" id="PS50109">
    <property type="entry name" value="HIS_KIN"/>
    <property type="match status" value="1"/>
</dbReference>
<dbReference type="PROSITE" id="PS50110">
    <property type="entry name" value="RESPONSE_REGULATORY"/>
    <property type="match status" value="1"/>
</dbReference>
<gene>
    <name type="primary">virA</name>
</gene>
<geneLocation type="plasmid">
    <name>pTi15955</name>
</geneLocation>
<protein>
    <recommendedName>
        <fullName>Wide host range VirA protein</fullName>
        <shortName>WHR VirA</shortName>
        <ecNumber>2.7.13.3</ecNumber>
    </recommendedName>
</protein>
<accession>P10799</accession>
<name>VIRA_AGRT9</name>
<sequence length="829" mass="91640">MNGRYSPTRQDFKTGAKPWSILALIVAAMIFAFMAVASWQDNATTQAILSQLRSINADSASLQRDVLRAHTGTVANYRPIISRLGALRKNLEDLKQLFRQSHIVSESNAAQLLRQLEVSLNSADAAVAAFGAQNVRLQDSLASFTRALSSLPGKASTDQTLEKPTELASMMLQFLRQPSPAISFEISLELERLQKQRGLDEAPVRILAREGPIILSLLPQVKDLVNMIQTSDTAEIAEMLQRECLEVYSLKNVEERSARIFLGSASVGLCLYIITLVYRLRKKTDWLARRLDYEELIKEIGVCFEGEAATTSSAQAALRIIQRFFDADTCALALVDHDRRWAVETFGAKHPKPVWDDSVLREIVSRTKADERATVFRIISSKKIVHLPLEIPGLSILLAHKSTDKLIAVCSLGYQSYRPRPCQGEIQLLELATACLCHYIDVRRKQTQCDVLARRLEHAQRLEAVGTLAGGIAHEFNNILGSILGHAELAQNSVSRTSVTRRYIDYIISSGDRAMLIIDQILTLSRKQERMIKPFSVSELVTEIAPLLRMALPPNIELSFRFDQMQSVIEGSPLELQQVLINICKNASQAMTANGQIDIIISQAFLPVKKILAHGVMPPGDYVLLSISDNGGGIPEAVLPHIFEPFFTTRARNGGTGLGLASVHGHISAFAGYIDVSSTVGHGTRFDIYLPPSSKEPVNPDSFFGRNKAPRGNGEIVALVEPDDLLREAYEDKIAALGYEPVGFRTFNEIRDWISKGNEADLVMVDQASLPEDQSPNSVDLVLKTASIIIGGNDLKMTLSREDVTRDLYLPKPISSRTMAHAILTKIKT</sequence>
<comment type="function">
    <text>Activates VirG, by phosphorylating it, in the presence of acetosyringone or hydroxysyringone.</text>
</comment>
<comment type="catalytic activity">
    <reaction>
        <text>ATP + protein L-histidine = ADP + protein N-phospho-L-histidine.</text>
        <dbReference type="EC" id="2.7.13.3"/>
    </reaction>
</comment>
<comment type="interaction">
    <interactant intactId="EBI-6452433">
        <id>P10799</id>
    </interactant>
    <interactant intactId="EBI-6452433">
        <id>P10799</id>
        <label>virA</label>
    </interactant>
    <organismsDiffer>false</organismsDiffer>
    <experiments>2</experiments>
</comment>
<comment type="subcellular location">
    <subcellularLocation>
        <location evidence="4">Cell membrane</location>
        <topology evidence="4">Multi-pass membrane protein</topology>
    </subcellularLocation>
</comment>
<feature type="chain" id="PRO_0000074897" description="Wide host range VirA protein">
    <location>
        <begin position="1"/>
        <end position="829"/>
    </location>
</feature>
<feature type="transmembrane region" description="Helical" evidence="1">
    <location>
        <begin position="19"/>
        <end position="39"/>
    </location>
</feature>
<feature type="transmembrane region" description="Helical" evidence="1">
    <location>
        <begin position="260"/>
        <end position="280"/>
    </location>
</feature>
<feature type="domain" description="Histidine kinase" evidence="2">
    <location>
        <begin position="471"/>
        <end position="694"/>
    </location>
</feature>
<feature type="domain" description="Response regulatory" evidence="3">
    <location>
        <begin position="716"/>
        <end position="827"/>
    </location>
</feature>
<feature type="modified residue" description="Phosphohistidine; by autocatalysis" evidence="2">
    <location>
        <position position="474"/>
    </location>
</feature>
<feature type="modified residue" description="4-aspartylphosphate" evidence="3">
    <location>
        <position position="766"/>
    </location>
</feature>